<sequence length="511" mass="55669">MSQSKKTVALIIMDGWGHREDTTNNAIAHAKTPVLDRLTKETTNTLISASGMDVGLPGGQMGNSEVGHVNLGAGRVVYQDFTRVTKAIEDGDFFENEVLVSNVDKAIKQDKAVHIMGLLSPGGVHSHQDHIFAMIKLAAKRGAKKIFLHAFLDGRDTPPRSAKAPLEAADKVFEELGVGKTATLVGRYYAMDRDSRWDRVEKAYKVIAKGEGAFNVACAIEGLENSYSRDENDEFMQPTVIGDAAPIEDGDALVFMNFRADRAREISRPFVEKDFSDFEKGEHIDLSAFVMLTQYAESIDAPAAYPPVALVNVMGEWLANHGKTQLRISETEKFAHVTFFYSGGKEDLYEGEERILIPSPKVATYDLQPEMNSTELTDKLVEAIESGKFDAIICNYPNGDMVGHTGNFDAAVKACEAVDTCIGRVVEAIKKVGGDCLITADHGNAEKMADETTGQAHTAHTSELVPFWHVGQKTTARSGGTLSDVAPTMLHLMGMEQPAEMTGKPIVTLVK</sequence>
<evidence type="ECO:0000255" key="1">
    <source>
        <dbReference type="HAMAP-Rule" id="MF_01038"/>
    </source>
</evidence>
<comment type="function">
    <text evidence="1">Catalyzes the interconversion of 2-phosphoglycerate and 3-phosphoglycerate.</text>
</comment>
<comment type="catalytic activity">
    <reaction evidence="1">
        <text>(2R)-2-phosphoglycerate = (2R)-3-phosphoglycerate</text>
        <dbReference type="Rhea" id="RHEA:15901"/>
        <dbReference type="ChEBI" id="CHEBI:58272"/>
        <dbReference type="ChEBI" id="CHEBI:58289"/>
        <dbReference type="EC" id="5.4.2.12"/>
    </reaction>
</comment>
<comment type="cofactor">
    <cofactor evidence="1">
        <name>Mn(2+)</name>
        <dbReference type="ChEBI" id="CHEBI:29035"/>
    </cofactor>
    <text evidence="1">Binds 2 manganese ions per subunit.</text>
</comment>
<comment type="pathway">
    <text evidence="1">Carbohydrate degradation; glycolysis; pyruvate from D-glyceraldehyde 3-phosphate: step 3/5.</text>
</comment>
<comment type="subunit">
    <text evidence="1">Monomer.</text>
</comment>
<comment type="similarity">
    <text evidence="1">Belongs to the BPG-independent phosphoglycerate mutase family.</text>
</comment>
<name>GPMI_PSEA6</name>
<accession>Q15PS5</accession>
<feature type="chain" id="PRO_1000063986" description="2,3-bisphosphoglycerate-independent phosphoglycerate mutase">
    <location>
        <begin position="1"/>
        <end position="511"/>
    </location>
</feature>
<feature type="active site" description="Phosphoserine intermediate" evidence="1">
    <location>
        <position position="64"/>
    </location>
</feature>
<feature type="binding site" evidence="1">
    <location>
        <position position="14"/>
    </location>
    <ligand>
        <name>Mn(2+)</name>
        <dbReference type="ChEBI" id="CHEBI:29035"/>
        <label>2</label>
    </ligand>
</feature>
<feature type="binding site" evidence="1">
    <location>
        <position position="64"/>
    </location>
    <ligand>
        <name>Mn(2+)</name>
        <dbReference type="ChEBI" id="CHEBI:29035"/>
        <label>2</label>
    </ligand>
</feature>
<feature type="binding site" evidence="1">
    <location>
        <position position="125"/>
    </location>
    <ligand>
        <name>substrate</name>
    </ligand>
</feature>
<feature type="binding site" evidence="1">
    <location>
        <begin position="155"/>
        <end position="156"/>
    </location>
    <ligand>
        <name>substrate</name>
    </ligand>
</feature>
<feature type="binding site" evidence="1">
    <location>
        <position position="187"/>
    </location>
    <ligand>
        <name>substrate</name>
    </ligand>
</feature>
<feature type="binding site" evidence="1">
    <location>
        <position position="193"/>
    </location>
    <ligand>
        <name>substrate</name>
    </ligand>
</feature>
<feature type="binding site" evidence="1">
    <location>
        <begin position="259"/>
        <end position="262"/>
    </location>
    <ligand>
        <name>substrate</name>
    </ligand>
</feature>
<feature type="binding site" evidence="1">
    <location>
        <position position="333"/>
    </location>
    <ligand>
        <name>substrate</name>
    </ligand>
</feature>
<feature type="binding site" evidence="1">
    <location>
        <position position="400"/>
    </location>
    <ligand>
        <name>Mn(2+)</name>
        <dbReference type="ChEBI" id="CHEBI:29035"/>
        <label>1</label>
    </ligand>
</feature>
<feature type="binding site" evidence="1">
    <location>
        <position position="404"/>
    </location>
    <ligand>
        <name>Mn(2+)</name>
        <dbReference type="ChEBI" id="CHEBI:29035"/>
        <label>1</label>
    </ligand>
</feature>
<feature type="binding site" evidence="1">
    <location>
        <position position="441"/>
    </location>
    <ligand>
        <name>Mn(2+)</name>
        <dbReference type="ChEBI" id="CHEBI:29035"/>
        <label>2</label>
    </ligand>
</feature>
<feature type="binding site" evidence="1">
    <location>
        <position position="442"/>
    </location>
    <ligand>
        <name>Mn(2+)</name>
        <dbReference type="ChEBI" id="CHEBI:29035"/>
        <label>2</label>
    </ligand>
</feature>
<feature type="binding site" evidence="1">
    <location>
        <position position="460"/>
    </location>
    <ligand>
        <name>Mn(2+)</name>
        <dbReference type="ChEBI" id="CHEBI:29035"/>
        <label>1</label>
    </ligand>
</feature>
<gene>
    <name evidence="1" type="primary">gpmI</name>
    <name type="ordered locus">Patl_3611</name>
</gene>
<keyword id="KW-0324">Glycolysis</keyword>
<keyword id="KW-0413">Isomerase</keyword>
<keyword id="KW-0464">Manganese</keyword>
<keyword id="KW-0479">Metal-binding</keyword>
<reference key="1">
    <citation type="submission" date="2006-06" db="EMBL/GenBank/DDBJ databases">
        <title>Complete sequence of Pseudoalteromonas atlantica T6c.</title>
        <authorList>
            <consortium name="US DOE Joint Genome Institute"/>
            <person name="Copeland A."/>
            <person name="Lucas S."/>
            <person name="Lapidus A."/>
            <person name="Barry K."/>
            <person name="Detter J.C."/>
            <person name="Glavina del Rio T."/>
            <person name="Hammon N."/>
            <person name="Israni S."/>
            <person name="Dalin E."/>
            <person name="Tice H."/>
            <person name="Pitluck S."/>
            <person name="Saunders E."/>
            <person name="Brettin T."/>
            <person name="Bruce D."/>
            <person name="Han C."/>
            <person name="Tapia R."/>
            <person name="Gilna P."/>
            <person name="Schmutz J."/>
            <person name="Larimer F."/>
            <person name="Land M."/>
            <person name="Hauser L."/>
            <person name="Kyrpides N."/>
            <person name="Kim E."/>
            <person name="Karls A.C."/>
            <person name="Bartlett D."/>
            <person name="Higgins B.P."/>
            <person name="Richardson P."/>
        </authorList>
    </citation>
    <scope>NUCLEOTIDE SEQUENCE [LARGE SCALE GENOMIC DNA]</scope>
    <source>
        <strain>T6c / ATCC BAA-1087</strain>
    </source>
</reference>
<organism>
    <name type="scientific">Pseudoalteromonas atlantica (strain T6c / ATCC BAA-1087)</name>
    <dbReference type="NCBI Taxonomy" id="3042615"/>
    <lineage>
        <taxon>Bacteria</taxon>
        <taxon>Pseudomonadati</taxon>
        <taxon>Pseudomonadota</taxon>
        <taxon>Gammaproteobacteria</taxon>
        <taxon>Alteromonadales</taxon>
        <taxon>Alteromonadaceae</taxon>
        <taxon>Paraglaciecola</taxon>
    </lineage>
</organism>
<dbReference type="EC" id="5.4.2.12" evidence="1"/>
<dbReference type="EMBL" id="CP000388">
    <property type="protein sequence ID" value="ABG42113.1"/>
    <property type="molecule type" value="Genomic_DNA"/>
</dbReference>
<dbReference type="RefSeq" id="WP_011576338.1">
    <property type="nucleotide sequence ID" value="NC_008228.1"/>
</dbReference>
<dbReference type="SMR" id="Q15PS5"/>
<dbReference type="STRING" id="342610.Patl_3611"/>
<dbReference type="KEGG" id="pat:Patl_3611"/>
<dbReference type="eggNOG" id="COG0696">
    <property type="taxonomic scope" value="Bacteria"/>
</dbReference>
<dbReference type="HOGENOM" id="CLU_026099_2_0_6"/>
<dbReference type="OrthoDB" id="9800863at2"/>
<dbReference type="UniPathway" id="UPA00109">
    <property type="reaction ID" value="UER00186"/>
</dbReference>
<dbReference type="Proteomes" id="UP000001981">
    <property type="component" value="Chromosome"/>
</dbReference>
<dbReference type="GO" id="GO:0005829">
    <property type="term" value="C:cytosol"/>
    <property type="evidence" value="ECO:0007669"/>
    <property type="project" value="TreeGrafter"/>
</dbReference>
<dbReference type="GO" id="GO:0030145">
    <property type="term" value="F:manganese ion binding"/>
    <property type="evidence" value="ECO:0007669"/>
    <property type="project" value="UniProtKB-UniRule"/>
</dbReference>
<dbReference type="GO" id="GO:0004619">
    <property type="term" value="F:phosphoglycerate mutase activity"/>
    <property type="evidence" value="ECO:0007669"/>
    <property type="project" value="UniProtKB-EC"/>
</dbReference>
<dbReference type="GO" id="GO:0006007">
    <property type="term" value="P:glucose catabolic process"/>
    <property type="evidence" value="ECO:0007669"/>
    <property type="project" value="InterPro"/>
</dbReference>
<dbReference type="GO" id="GO:0006096">
    <property type="term" value="P:glycolytic process"/>
    <property type="evidence" value="ECO:0007669"/>
    <property type="project" value="UniProtKB-UniRule"/>
</dbReference>
<dbReference type="CDD" id="cd16010">
    <property type="entry name" value="iPGM"/>
    <property type="match status" value="1"/>
</dbReference>
<dbReference type="FunFam" id="3.40.1450.10:FF:000001">
    <property type="entry name" value="2,3-bisphosphoglycerate-independent phosphoglycerate mutase"/>
    <property type="match status" value="1"/>
</dbReference>
<dbReference type="FunFam" id="3.40.720.10:FF:000001">
    <property type="entry name" value="2,3-bisphosphoglycerate-independent phosphoglycerate mutase"/>
    <property type="match status" value="1"/>
</dbReference>
<dbReference type="Gene3D" id="3.40.720.10">
    <property type="entry name" value="Alkaline Phosphatase, subunit A"/>
    <property type="match status" value="1"/>
</dbReference>
<dbReference type="Gene3D" id="3.40.1450.10">
    <property type="entry name" value="BPG-independent phosphoglycerate mutase, domain B"/>
    <property type="match status" value="1"/>
</dbReference>
<dbReference type="HAMAP" id="MF_01038">
    <property type="entry name" value="GpmI"/>
    <property type="match status" value="1"/>
</dbReference>
<dbReference type="InterPro" id="IPR017850">
    <property type="entry name" value="Alkaline_phosphatase_core_sf"/>
</dbReference>
<dbReference type="InterPro" id="IPR011258">
    <property type="entry name" value="BPG-indep_PGM_N"/>
</dbReference>
<dbReference type="InterPro" id="IPR006124">
    <property type="entry name" value="Metalloenzyme"/>
</dbReference>
<dbReference type="InterPro" id="IPR036646">
    <property type="entry name" value="PGAM_B_sf"/>
</dbReference>
<dbReference type="InterPro" id="IPR005995">
    <property type="entry name" value="Pgm_bpd_ind"/>
</dbReference>
<dbReference type="NCBIfam" id="TIGR01307">
    <property type="entry name" value="pgm_bpd_ind"/>
    <property type="match status" value="1"/>
</dbReference>
<dbReference type="PANTHER" id="PTHR31637">
    <property type="entry name" value="2,3-BISPHOSPHOGLYCERATE-INDEPENDENT PHOSPHOGLYCERATE MUTASE"/>
    <property type="match status" value="1"/>
</dbReference>
<dbReference type="PANTHER" id="PTHR31637:SF0">
    <property type="entry name" value="2,3-BISPHOSPHOGLYCERATE-INDEPENDENT PHOSPHOGLYCERATE MUTASE"/>
    <property type="match status" value="1"/>
</dbReference>
<dbReference type="Pfam" id="PF06415">
    <property type="entry name" value="iPGM_N"/>
    <property type="match status" value="1"/>
</dbReference>
<dbReference type="Pfam" id="PF01676">
    <property type="entry name" value="Metalloenzyme"/>
    <property type="match status" value="1"/>
</dbReference>
<dbReference type="PIRSF" id="PIRSF001492">
    <property type="entry name" value="IPGAM"/>
    <property type="match status" value="1"/>
</dbReference>
<dbReference type="SUPFAM" id="SSF64158">
    <property type="entry name" value="2,3-Bisphosphoglycerate-independent phosphoglycerate mutase, substrate-binding domain"/>
    <property type="match status" value="1"/>
</dbReference>
<dbReference type="SUPFAM" id="SSF53649">
    <property type="entry name" value="Alkaline phosphatase-like"/>
    <property type="match status" value="1"/>
</dbReference>
<proteinExistence type="inferred from homology"/>
<protein>
    <recommendedName>
        <fullName evidence="1">2,3-bisphosphoglycerate-independent phosphoglycerate mutase</fullName>
        <shortName evidence="1">BPG-independent PGAM</shortName>
        <shortName evidence="1">Phosphoglyceromutase</shortName>
        <shortName evidence="1">iPGM</shortName>
        <ecNumber evidence="1">5.4.2.12</ecNumber>
    </recommendedName>
</protein>